<gene>
    <name type="ordered locus">SCO4179</name>
    <name type="ORF">SCD66.16</name>
</gene>
<dbReference type="EMBL" id="AL939119">
    <property type="protein sequence ID" value="CAB94083.1"/>
    <property type="molecule type" value="Genomic_DNA"/>
</dbReference>
<dbReference type="RefSeq" id="NP_628355.1">
    <property type="nucleotide sequence ID" value="NC_003888.3"/>
</dbReference>
<dbReference type="RefSeq" id="WP_003974791.1">
    <property type="nucleotide sequence ID" value="NZ_VNID01000038.1"/>
</dbReference>
<dbReference type="SMR" id="Q9K4F9"/>
<dbReference type="STRING" id="100226.gene:17761823"/>
<dbReference type="PaxDb" id="100226-SCO4179"/>
<dbReference type="KEGG" id="sco:SCO4179"/>
<dbReference type="PATRIC" id="fig|100226.15.peg.4243"/>
<dbReference type="eggNOG" id="COG3485">
    <property type="taxonomic scope" value="Bacteria"/>
</dbReference>
<dbReference type="HOGENOM" id="CLU_085483_0_0_11"/>
<dbReference type="InParanoid" id="Q9K4F9"/>
<dbReference type="OrthoDB" id="4804006at2"/>
<dbReference type="PhylomeDB" id="Q9K4F9"/>
<dbReference type="Proteomes" id="UP000001973">
    <property type="component" value="Chromosome"/>
</dbReference>
<dbReference type="CDD" id="cd07828">
    <property type="entry name" value="lipocalin_heme-bd-THAP4-like"/>
    <property type="match status" value="1"/>
</dbReference>
<dbReference type="Gene3D" id="2.40.128.20">
    <property type="match status" value="1"/>
</dbReference>
<dbReference type="HAMAP" id="MF_01297">
    <property type="entry name" value="nitrobindin"/>
    <property type="match status" value="1"/>
</dbReference>
<dbReference type="InterPro" id="IPR012674">
    <property type="entry name" value="Calycin"/>
</dbReference>
<dbReference type="InterPro" id="IPR022939">
    <property type="entry name" value="Nb(III)_bact/plant"/>
</dbReference>
<dbReference type="InterPro" id="IPR045165">
    <property type="entry name" value="Nitrobindin"/>
</dbReference>
<dbReference type="InterPro" id="IPR014878">
    <property type="entry name" value="THAP4-like_heme-bd"/>
</dbReference>
<dbReference type="PANTHER" id="PTHR15854:SF4">
    <property type="entry name" value="PEROXYNITRITE ISOMERASE THAP4"/>
    <property type="match status" value="1"/>
</dbReference>
<dbReference type="PANTHER" id="PTHR15854">
    <property type="entry name" value="THAP4 PROTEIN"/>
    <property type="match status" value="1"/>
</dbReference>
<dbReference type="Pfam" id="PF08768">
    <property type="entry name" value="THAP4_heme-bd"/>
    <property type="match status" value="1"/>
</dbReference>
<dbReference type="SUPFAM" id="SSF50814">
    <property type="entry name" value="Lipocalins"/>
    <property type="match status" value="1"/>
</dbReference>
<feature type="chain" id="PRO_0000356953" description="Ferric nitrobindin-like protein">
    <location>
        <begin position="1"/>
        <end position="191"/>
    </location>
</feature>
<feature type="short sequence motif" description="GXWXGXG" evidence="1">
    <location>
        <begin position="20"/>
        <end position="26"/>
    </location>
</feature>
<accession>Q9K4F9</accession>
<name>NBLIK_STRCO</name>
<proteinExistence type="inferred from homology"/>
<protein>
    <recommendedName>
        <fullName evidence="2">Ferric nitrobindin-like protein</fullName>
    </recommendedName>
</protein>
<evidence type="ECO:0000255" key="1">
    <source>
        <dbReference type="HAMAP-Rule" id="MF_01297"/>
    </source>
</evidence>
<evidence type="ECO:0000305" key="2"/>
<keyword id="KW-1185">Reference proteome</keyword>
<comment type="similarity">
    <text evidence="1">Belongs to the nitrobindin family.</text>
</comment>
<comment type="caution">
    <text evidence="2">Lacks the conserved His residue that binds heme iron in the nitrobindin family.</text>
</comment>
<organism>
    <name type="scientific">Streptomyces coelicolor (strain ATCC BAA-471 / A3(2) / M145)</name>
    <dbReference type="NCBI Taxonomy" id="100226"/>
    <lineage>
        <taxon>Bacteria</taxon>
        <taxon>Bacillati</taxon>
        <taxon>Actinomycetota</taxon>
        <taxon>Actinomycetes</taxon>
        <taxon>Kitasatosporales</taxon>
        <taxon>Streptomycetaceae</taxon>
        <taxon>Streptomyces</taxon>
        <taxon>Streptomyces albidoflavus group</taxon>
    </lineage>
</organism>
<sequence length="191" mass="21694">MIEIPSDLHKDLVPLVFLLGDWAGAGVHDFPGAEKCNFGQEVSFTHDGRDFLEYQSHTWVLDNDGNKVRPLESEHGFWRIDANRKVEVTMTRDDGVIEIWYGELADQKPQIDLVTDAVARTAASQPYTGGKRLYGYVKSDLMWVGEKQTPEVELRPYMSAHLKKVVTPEDVERWAKALPDDMPDDGIAFFK</sequence>
<reference key="1">
    <citation type="journal article" date="2002" name="Nature">
        <title>Complete genome sequence of the model actinomycete Streptomyces coelicolor A3(2).</title>
        <authorList>
            <person name="Bentley S.D."/>
            <person name="Chater K.F."/>
            <person name="Cerdeno-Tarraga A.-M."/>
            <person name="Challis G.L."/>
            <person name="Thomson N.R."/>
            <person name="James K.D."/>
            <person name="Harris D.E."/>
            <person name="Quail M.A."/>
            <person name="Kieser H."/>
            <person name="Harper D."/>
            <person name="Bateman A."/>
            <person name="Brown S."/>
            <person name="Chandra G."/>
            <person name="Chen C.W."/>
            <person name="Collins M."/>
            <person name="Cronin A."/>
            <person name="Fraser A."/>
            <person name="Goble A."/>
            <person name="Hidalgo J."/>
            <person name="Hornsby T."/>
            <person name="Howarth S."/>
            <person name="Huang C.-H."/>
            <person name="Kieser T."/>
            <person name="Larke L."/>
            <person name="Murphy L.D."/>
            <person name="Oliver K."/>
            <person name="O'Neil S."/>
            <person name="Rabbinowitsch E."/>
            <person name="Rajandream M.A."/>
            <person name="Rutherford K.M."/>
            <person name="Rutter S."/>
            <person name="Seeger K."/>
            <person name="Saunders D."/>
            <person name="Sharp S."/>
            <person name="Squares R."/>
            <person name="Squares S."/>
            <person name="Taylor K."/>
            <person name="Warren T."/>
            <person name="Wietzorrek A."/>
            <person name="Woodward J.R."/>
            <person name="Barrell B.G."/>
            <person name="Parkhill J."/>
            <person name="Hopwood D.A."/>
        </authorList>
    </citation>
    <scope>NUCLEOTIDE SEQUENCE [LARGE SCALE GENOMIC DNA]</scope>
    <source>
        <strain>ATCC BAA-471 / A3(2) / M145</strain>
    </source>
</reference>